<keyword id="KW-0963">Cytoplasm</keyword>
<keyword id="KW-0227">DNA damage</keyword>
<keyword id="KW-0228">DNA excision</keyword>
<keyword id="KW-0234">DNA repair</keyword>
<keyword id="KW-0267">Excision nuclease</keyword>
<keyword id="KW-0742">SOS response</keyword>
<sequence length="593" mass="68644">MEDYKQRIKNKLNVVPMEPGCYLMKDRNDQVIYVGKAKKLRNRLRSYFTGAHDAKTTRLVGEIRRFEFIVTSSETESLLLELNLIKQYQPRYNILLKDDKSYPFIKITKEKYPRLLVTRTVKQGTGKYFGPYPNAYSAQETKKLLDRIYPYRKCDKMPDKLCLYYHIGQCLGPCVYDVDLSKYAQMTKEITDFLNGEDKTILKSLEERMLTASESLDFERAKEYRDLIQHIQNLTNKQKIMSSDKTIRDVFGYSVDKGWMCIQVFFIRQGNMIKRDTTMIPLQQTEEEEFYTFIGQFYSLNQHILPKEVHVPRNLDKEMIQSVVDTKIVQPARGPKKDMVDLAAHNAKVSLNNKFELISRDESRTIKAIEELGTQMGIQTPIRIEAFDNSNIQGVDPVSAMVTFVDGKPDKKNYRKYKIKTVKGPDDYKSMREVVRRRYSRVLNEGLPLPDLIIVDGGKGHMNGVIDVLQNELGLDIPVAGLQKNDKHQTSELLYGASAEIVPLKKNSQAFYLLHRIQDEVHRFAITFHRQTRQKTGLKSILDDIDGIGSKRKTLLLRSFGSIKKMKEATLEDFKNIGIPENVAKNLHEQLHK</sequence>
<feature type="chain" id="PRO_0000264954" description="UvrABC system protein C">
    <location>
        <begin position="1"/>
        <end position="593"/>
    </location>
</feature>
<feature type="domain" description="GIY-YIG" evidence="1">
    <location>
        <begin position="17"/>
        <end position="94"/>
    </location>
</feature>
<feature type="domain" description="UVR" evidence="1">
    <location>
        <begin position="199"/>
        <end position="234"/>
    </location>
</feature>
<dbReference type="EMBL" id="AJ938182">
    <property type="protein sequence ID" value="CAI80698.1"/>
    <property type="molecule type" value="Genomic_DNA"/>
</dbReference>
<dbReference type="RefSeq" id="WP_000390530.1">
    <property type="nucleotide sequence ID" value="NC_007622.1"/>
</dbReference>
<dbReference type="SMR" id="Q2YXC9"/>
<dbReference type="KEGG" id="sab:SAB1010"/>
<dbReference type="HOGENOM" id="CLU_014841_3_2_9"/>
<dbReference type="GO" id="GO:0005737">
    <property type="term" value="C:cytoplasm"/>
    <property type="evidence" value="ECO:0007669"/>
    <property type="project" value="UniProtKB-SubCell"/>
</dbReference>
<dbReference type="GO" id="GO:0009380">
    <property type="term" value="C:excinuclease repair complex"/>
    <property type="evidence" value="ECO:0007669"/>
    <property type="project" value="InterPro"/>
</dbReference>
<dbReference type="GO" id="GO:0003677">
    <property type="term" value="F:DNA binding"/>
    <property type="evidence" value="ECO:0007669"/>
    <property type="project" value="UniProtKB-UniRule"/>
</dbReference>
<dbReference type="GO" id="GO:0009381">
    <property type="term" value="F:excinuclease ABC activity"/>
    <property type="evidence" value="ECO:0007669"/>
    <property type="project" value="UniProtKB-UniRule"/>
</dbReference>
<dbReference type="GO" id="GO:0006289">
    <property type="term" value="P:nucleotide-excision repair"/>
    <property type="evidence" value="ECO:0007669"/>
    <property type="project" value="UniProtKB-UniRule"/>
</dbReference>
<dbReference type="GO" id="GO:0009432">
    <property type="term" value="P:SOS response"/>
    <property type="evidence" value="ECO:0007669"/>
    <property type="project" value="UniProtKB-UniRule"/>
</dbReference>
<dbReference type="CDD" id="cd10434">
    <property type="entry name" value="GIY-YIG_UvrC_Cho"/>
    <property type="match status" value="1"/>
</dbReference>
<dbReference type="FunFam" id="3.30.420.340:FF:000002">
    <property type="entry name" value="UvrABC system protein C"/>
    <property type="match status" value="1"/>
</dbReference>
<dbReference type="FunFam" id="3.40.1440.10:FF:000001">
    <property type="entry name" value="UvrABC system protein C"/>
    <property type="match status" value="1"/>
</dbReference>
<dbReference type="FunFam" id="4.10.860.10:FF:000007">
    <property type="entry name" value="UvrABC system protein C"/>
    <property type="match status" value="1"/>
</dbReference>
<dbReference type="Gene3D" id="1.10.150.20">
    <property type="entry name" value="5' to 3' exonuclease, C-terminal subdomain"/>
    <property type="match status" value="1"/>
</dbReference>
<dbReference type="Gene3D" id="3.40.1440.10">
    <property type="entry name" value="GIY-YIG endonuclease"/>
    <property type="match status" value="1"/>
</dbReference>
<dbReference type="Gene3D" id="4.10.860.10">
    <property type="entry name" value="UVR domain"/>
    <property type="match status" value="1"/>
</dbReference>
<dbReference type="Gene3D" id="3.30.420.340">
    <property type="entry name" value="UvrC, RNAse H endonuclease domain"/>
    <property type="match status" value="1"/>
</dbReference>
<dbReference type="HAMAP" id="MF_00203">
    <property type="entry name" value="UvrC"/>
    <property type="match status" value="1"/>
</dbReference>
<dbReference type="InterPro" id="IPR000305">
    <property type="entry name" value="GIY-YIG_endonuc"/>
</dbReference>
<dbReference type="InterPro" id="IPR035901">
    <property type="entry name" value="GIY-YIG_endonuc_sf"/>
</dbReference>
<dbReference type="InterPro" id="IPR047296">
    <property type="entry name" value="GIY-YIG_UvrC_Cho"/>
</dbReference>
<dbReference type="InterPro" id="IPR010994">
    <property type="entry name" value="RuvA_2-like"/>
</dbReference>
<dbReference type="InterPro" id="IPR001943">
    <property type="entry name" value="UVR_dom"/>
</dbReference>
<dbReference type="InterPro" id="IPR036876">
    <property type="entry name" value="UVR_dom_sf"/>
</dbReference>
<dbReference type="InterPro" id="IPR050066">
    <property type="entry name" value="UvrABC_protein_C"/>
</dbReference>
<dbReference type="InterPro" id="IPR004791">
    <property type="entry name" value="UvrC"/>
</dbReference>
<dbReference type="InterPro" id="IPR001162">
    <property type="entry name" value="UvrC_RNase_H_dom"/>
</dbReference>
<dbReference type="InterPro" id="IPR038476">
    <property type="entry name" value="UvrC_RNase_H_dom_sf"/>
</dbReference>
<dbReference type="NCBIfam" id="TIGR00194">
    <property type="entry name" value="uvrC"/>
    <property type="match status" value="1"/>
</dbReference>
<dbReference type="PANTHER" id="PTHR30562:SF1">
    <property type="entry name" value="UVRABC SYSTEM PROTEIN C"/>
    <property type="match status" value="1"/>
</dbReference>
<dbReference type="PANTHER" id="PTHR30562">
    <property type="entry name" value="UVRC/OXIDOREDUCTASE"/>
    <property type="match status" value="1"/>
</dbReference>
<dbReference type="Pfam" id="PF01541">
    <property type="entry name" value="GIY-YIG"/>
    <property type="match status" value="1"/>
</dbReference>
<dbReference type="Pfam" id="PF02151">
    <property type="entry name" value="UVR"/>
    <property type="match status" value="1"/>
</dbReference>
<dbReference type="Pfam" id="PF22920">
    <property type="entry name" value="UvrC_RNaseH"/>
    <property type="match status" value="1"/>
</dbReference>
<dbReference type="Pfam" id="PF08459">
    <property type="entry name" value="UvrC_RNaseH_dom"/>
    <property type="match status" value="1"/>
</dbReference>
<dbReference type="SMART" id="SM00465">
    <property type="entry name" value="GIYc"/>
    <property type="match status" value="1"/>
</dbReference>
<dbReference type="SUPFAM" id="SSF46600">
    <property type="entry name" value="C-terminal UvrC-binding domain of UvrB"/>
    <property type="match status" value="1"/>
</dbReference>
<dbReference type="SUPFAM" id="SSF82771">
    <property type="entry name" value="GIY-YIG endonuclease"/>
    <property type="match status" value="1"/>
</dbReference>
<dbReference type="SUPFAM" id="SSF47781">
    <property type="entry name" value="RuvA domain 2-like"/>
    <property type="match status" value="1"/>
</dbReference>
<dbReference type="PROSITE" id="PS50164">
    <property type="entry name" value="GIY_YIG"/>
    <property type="match status" value="1"/>
</dbReference>
<dbReference type="PROSITE" id="PS50151">
    <property type="entry name" value="UVR"/>
    <property type="match status" value="1"/>
</dbReference>
<dbReference type="PROSITE" id="PS50165">
    <property type="entry name" value="UVRC"/>
    <property type="match status" value="1"/>
</dbReference>
<reference key="1">
    <citation type="journal article" date="2007" name="PLoS ONE">
        <title>Molecular correlates of host specialization in Staphylococcus aureus.</title>
        <authorList>
            <person name="Herron-Olson L."/>
            <person name="Fitzgerald J.R."/>
            <person name="Musser J.M."/>
            <person name="Kapur V."/>
        </authorList>
    </citation>
    <scope>NUCLEOTIDE SEQUENCE [LARGE SCALE GENOMIC DNA]</scope>
    <source>
        <strain>bovine RF122 / ET3-1</strain>
    </source>
</reference>
<evidence type="ECO:0000255" key="1">
    <source>
        <dbReference type="HAMAP-Rule" id="MF_00203"/>
    </source>
</evidence>
<protein>
    <recommendedName>
        <fullName evidence="1">UvrABC system protein C</fullName>
        <shortName evidence="1">Protein UvrC</shortName>
    </recommendedName>
    <alternativeName>
        <fullName evidence="1">Excinuclease ABC subunit C</fullName>
    </alternativeName>
</protein>
<gene>
    <name evidence="1" type="primary">uvrC</name>
    <name type="ordered locus">SAB1010</name>
</gene>
<accession>Q2YXC9</accession>
<comment type="function">
    <text evidence="1">The UvrABC repair system catalyzes the recognition and processing of DNA lesions. UvrC both incises the 5' and 3' sides of the lesion. The N-terminal half is responsible for the 3' incision and the C-terminal half is responsible for the 5' incision.</text>
</comment>
<comment type="subunit">
    <text evidence="1">Interacts with UvrB in an incision complex.</text>
</comment>
<comment type="subcellular location">
    <subcellularLocation>
        <location evidence="1">Cytoplasm</location>
    </subcellularLocation>
</comment>
<comment type="similarity">
    <text evidence="1">Belongs to the UvrC family.</text>
</comment>
<proteinExistence type="inferred from homology"/>
<name>UVRC_STAAB</name>
<organism>
    <name type="scientific">Staphylococcus aureus (strain bovine RF122 / ET3-1)</name>
    <dbReference type="NCBI Taxonomy" id="273036"/>
    <lineage>
        <taxon>Bacteria</taxon>
        <taxon>Bacillati</taxon>
        <taxon>Bacillota</taxon>
        <taxon>Bacilli</taxon>
        <taxon>Bacillales</taxon>
        <taxon>Staphylococcaceae</taxon>
        <taxon>Staphylococcus</taxon>
    </lineage>
</organism>